<accession>A5F353</accession>
<accession>C3LYN0</accession>
<protein>
    <recommendedName>
        <fullName evidence="1">Membrane-bound lytic murein transglycosylase F</fullName>
        <ecNumber evidence="1">4.2.2.n1</ecNumber>
    </recommendedName>
    <alternativeName>
        <fullName evidence="1">Murein lyase F</fullName>
    </alternativeName>
</protein>
<evidence type="ECO:0000255" key="1">
    <source>
        <dbReference type="HAMAP-Rule" id="MF_02016"/>
    </source>
</evidence>
<evidence type="ECO:0000256" key="2">
    <source>
        <dbReference type="SAM" id="MobiDB-lite"/>
    </source>
</evidence>
<keyword id="KW-0998">Cell outer membrane</keyword>
<keyword id="KW-0961">Cell wall biogenesis/degradation</keyword>
<keyword id="KW-0456">Lyase</keyword>
<keyword id="KW-0472">Membrane</keyword>
<keyword id="KW-0732">Signal</keyword>
<dbReference type="EC" id="4.2.2.n1" evidence="1"/>
<dbReference type="EMBL" id="CP000627">
    <property type="protein sequence ID" value="ABQ20649.1"/>
    <property type="molecule type" value="Genomic_DNA"/>
</dbReference>
<dbReference type="EMBL" id="CP001235">
    <property type="protein sequence ID" value="ACP08896.1"/>
    <property type="molecule type" value="Genomic_DNA"/>
</dbReference>
<dbReference type="RefSeq" id="WP_000187388.1">
    <property type="nucleotide sequence ID" value="NZ_JAACZH010000023.1"/>
</dbReference>
<dbReference type="SMR" id="A5F353"/>
<dbReference type="CAZy" id="GH23">
    <property type="family name" value="Glycoside Hydrolase Family 23"/>
</dbReference>
<dbReference type="GeneID" id="69720421"/>
<dbReference type="KEGG" id="vco:VC0395_A0392"/>
<dbReference type="KEGG" id="vcr:VC395_0882"/>
<dbReference type="PATRIC" id="fig|345073.21.peg.855"/>
<dbReference type="eggNOG" id="COG4623">
    <property type="taxonomic scope" value="Bacteria"/>
</dbReference>
<dbReference type="HOGENOM" id="CLU_027494_0_1_6"/>
<dbReference type="OrthoDB" id="9815002at2"/>
<dbReference type="Proteomes" id="UP000000249">
    <property type="component" value="Chromosome 2"/>
</dbReference>
<dbReference type="GO" id="GO:0009279">
    <property type="term" value="C:cell outer membrane"/>
    <property type="evidence" value="ECO:0007669"/>
    <property type="project" value="UniProtKB-SubCell"/>
</dbReference>
<dbReference type="GO" id="GO:0008933">
    <property type="term" value="F:peptidoglycan lytic transglycosylase activity"/>
    <property type="evidence" value="ECO:0007669"/>
    <property type="project" value="UniProtKB-UniRule"/>
</dbReference>
<dbReference type="GO" id="GO:0016998">
    <property type="term" value="P:cell wall macromolecule catabolic process"/>
    <property type="evidence" value="ECO:0007669"/>
    <property type="project" value="UniProtKB-UniRule"/>
</dbReference>
<dbReference type="GO" id="GO:0071555">
    <property type="term" value="P:cell wall organization"/>
    <property type="evidence" value="ECO:0007669"/>
    <property type="project" value="UniProtKB-KW"/>
</dbReference>
<dbReference type="GO" id="GO:0009253">
    <property type="term" value="P:peptidoglycan catabolic process"/>
    <property type="evidence" value="ECO:0007669"/>
    <property type="project" value="TreeGrafter"/>
</dbReference>
<dbReference type="CDD" id="cd13403">
    <property type="entry name" value="MLTF-like"/>
    <property type="match status" value="1"/>
</dbReference>
<dbReference type="CDD" id="cd01009">
    <property type="entry name" value="PBP2_YfhD_N"/>
    <property type="match status" value="1"/>
</dbReference>
<dbReference type="FunFam" id="1.10.530.10:FF:000003">
    <property type="entry name" value="Membrane-bound lytic murein transglycosylase F"/>
    <property type="match status" value="1"/>
</dbReference>
<dbReference type="FunFam" id="3.40.190.10:FF:000373">
    <property type="entry name" value="Membrane-bound lytic murein transglycosylase F"/>
    <property type="match status" value="1"/>
</dbReference>
<dbReference type="Gene3D" id="1.10.530.10">
    <property type="match status" value="1"/>
</dbReference>
<dbReference type="Gene3D" id="3.40.190.10">
    <property type="entry name" value="Periplasmic binding protein-like II"/>
    <property type="match status" value="2"/>
</dbReference>
<dbReference type="HAMAP" id="MF_02016">
    <property type="entry name" value="MltF"/>
    <property type="match status" value="1"/>
</dbReference>
<dbReference type="InterPro" id="IPR023346">
    <property type="entry name" value="Lysozyme-like_dom_sf"/>
</dbReference>
<dbReference type="InterPro" id="IPR023703">
    <property type="entry name" value="MltF"/>
</dbReference>
<dbReference type="InterPro" id="IPR001638">
    <property type="entry name" value="Solute-binding_3/MltF_N"/>
</dbReference>
<dbReference type="InterPro" id="IPR000189">
    <property type="entry name" value="Transglyc_AS"/>
</dbReference>
<dbReference type="InterPro" id="IPR008258">
    <property type="entry name" value="Transglycosylase_SLT_dom_1"/>
</dbReference>
<dbReference type="NCBIfam" id="NF008112">
    <property type="entry name" value="PRK10859.1"/>
    <property type="match status" value="1"/>
</dbReference>
<dbReference type="PANTHER" id="PTHR35936">
    <property type="entry name" value="MEMBRANE-BOUND LYTIC MUREIN TRANSGLYCOSYLASE F"/>
    <property type="match status" value="1"/>
</dbReference>
<dbReference type="PANTHER" id="PTHR35936:SF32">
    <property type="entry name" value="MEMBRANE-BOUND LYTIC MUREIN TRANSGLYCOSYLASE F"/>
    <property type="match status" value="1"/>
</dbReference>
<dbReference type="Pfam" id="PF00497">
    <property type="entry name" value="SBP_bac_3"/>
    <property type="match status" value="1"/>
</dbReference>
<dbReference type="Pfam" id="PF01464">
    <property type="entry name" value="SLT"/>
    <property type="match status" value="1"/>
</dbReference>
<dbReference type="SMART" id="SM00062">
    <property type="entry name" value="PBPb"/>
    <property type="match status" value="1"/>
</dbReference>
<dbReference type="SUPFAM" id="SSF53955">
    <property type="entry name" value="Lysozyme-like"/>
    <property type="match status" value="1"/>
</dbReference>
<dbReference type="SUPFAM" id="SSF53850">
    <property type="entry name" value="Periplasmic binding protein-like II"/>
    <property type="match status" value="1"/>
</dbReference>
<dbReference type="PROSITE" id="PS51257">
    <property type="entry name" value="PROKAR_LIPOPROTEIN"/>
    <property type="match status" value="1"/>
</dbReference>
<dbReference type="PROSITE" id="PS00922">
    <property type="entry name" value="TRANSGLYCOSYLASE"/>
    <property type="match status" value="1"/>
</dbReference>
<sequence>MTPFAYKLPIRALWLGLLSLLLVGCQIDSEPKSELEKIRERGVLRVGTLNNPLSYYIGPDGPTGLDYELAREFAKELGVKLEMKPAYRLSSLFPALKNGEVDIIAAGLSQSEERLKDFRAGPAYYYVSQQVVYKKGDWRPRSFKQLVERQQTLLKDNPELAFFSVVDDSHFEHTLLAKQQKYPDFQFHVDSNSDVNDLLKKVSQGELLFTMADSVEVSLSQRIYPELAAAFELTEDQPISWFIRRSDDESLYALMIEFFGNLKQSGYLASLEEKYIGHIGAFDYVDTRAFIRALDTRLPRWTPLFQKYSAEFDWRLVAALAYQESHWNPYAKSPTGVRGLMMLTLPTARSVGVSDRLDPEQSIRGGVEYLRRMMERVPDSISEHEKIWFALASYNIGYGHMMDARRLTKSQGADPDSWADVKDRLPQLQQKKYFTQTRYGYARGDEARNYVENIRRYYQSIIGHLEQRQLATGDESIEDLTVIALDEEFFNEEANREILDEEAEALESESLENSESSAEPSAKPSTESKN</sequence>
<comment type="function">
    <text evidence="1">Murein-degrading enzyme that degrades murein glycan strands and insoluble, high-molecular weight murein sacculi, with the concomitant formation of a 1,6-anhydromuramoyl product. Lytic transglycosylases (LTs) play an integral role in the metabolism of the peptidoglycan (PG) sacculus. Their lytic action creates space within the PG sacculus to allow for its expansion as well as for the insertion of various structures such as secretion systems and flagella.</text>
</comment>
<comment type="catalytic activity">
    <reaction evidence="1">
        <text>Exolytic cleavage of the (1-&gt;4)-beta-glycosidic linkage between N-acetylmuramic acid (MurNAc) and N-acetylglucosamine (GlcNAc) residues in peptidoglycan, from either the reducing or the non-reducing ends of the peptidoglycan chains, with concomitant formation of a 1,6-anhydrobond in the MurNAc residue.</text>
        <dbReference type="EC" id="4.2.2.n1"/>
    </reaction>
</comment>
<comment type="subcellular location">
    <subcellularLocation>
        <location>Cell outer membrane</location>
        <topology>Peripheral membrane protein</topology>
    </subcellularLocation>
    <text evidence="1">Attached to the inner leaflet of the outer membrane.</text>
</comment>
<comment type="domain">
    <text evidence="1">The N-terminal domain does not have lytic activity and probably modulates enzymatic activity. The C-terminal domain is the catalytic active domain.</text>
</comment>
<comment type="similarity">
    <text evidence="1">In the N-terminal section; belongs to the bacterial solute-binding protein 3 family.</text>
</comment>
<comment type="similarity">
    <text evidence="1">In the C-terminal section; belongs to the transglycosylase Slt family.</text>
</comment>
<proteinExistence type="inferred from homology"/>
<organism>
    <name type="scientific">Vibrio cholerae serotype O1 (strain ATCC 39541 / Classical Ogawa 395 / O395)</name>
    <dbReference type="NCBI Taxonomy" id="345073"/>
    <lineage>
        <taxon>Bacteria</taxon>
        <taxon>Pseudomonadati</taxon>
        <taxon>Pseudomonadota</taxon>
        <taxon>Gammaproteobacteria</taxon>
        <taxon>Vibrionales</taxon>
        <taxon>Vibrionaceae</taxon>
        <taxon>Vibrio</taxon>
    </lineage>
</organism>
<feature type="signal peptide" evidence="1">
    <location>
        <begin position="1"/>
        <end position="27"/>
    </location>
</feature>
<feature type="chain" id="PRO_0000353989" description="Membrane-bound lytic murein transglycosylase F">
    <location>
        <begin position="28"/>
        <end position="530"/>
    </location>
</feature>
<feature type="region of interest" description="Non-LT domain" evidence="1">
    <location>
        <begin position="28"/>
        <end position="279"/>
    </location>
</feature>
<feature type="region of interest" description="LT domain" evidence="1">
    <location>
        <begin position="280"/>
        <end position="530"/>
    </location>
</feature>
<feature type="region of interest" description="Disordered" evidence="2">
    <location>
        <begin position="505"/>
        <end position="530"/>
    </location>
</feature>
<feature type="compositionally biased region" description="Low complexity" evidence="2">
    <location>
        <begin position="513"/>
        <end position="530"/>
    </location>
</feature>
<feature type="active site" evidence="1">
    <location>
        <position position="324"/>
    </location>
</feature>
<gene>
    <name evidence="1" type="primary">mltF</name>
    <name type="ordered locus">VC0395_A0392</name>
    <name type="ordered locus">VC395_0882</name>
</gene>
<name>MLTF_VIBC3</name>
<reference key="1">
    <citation type="submission" date="2007-03" db="EMBL/GenBank/DDBJ databases">
        <authorList>
            <person name="Heidelberg J."/>
        </authorList>
    </citation>
    <scope>NUCLEOTIDE SEQUENCE [LARGE SCALE GENOMIC DNA]</scope>
    <source>
        <strain>ATCC 39541 / Classical Ogawa 395 / O395</strain>
    </source>
</reference>
<reference key="2">
    <citation type="journal article" date="2008" name="PLoS ONE">
        <title>A recalibrated molecular clock and independent origins for the cholera pandemic clones.</title>
        <authorList>
            <person name="Feng L."/>
            <person name="Reeves P.R."/>
            <person name="Lan R."/>
            <person name="Ren Y."/>
            <person name="Gao C."/>
            <person name="Zhou Z."/>
            <person name="Ren Y."/>
            <person name="Cheng J."/>
            <person name="Wang W."/>
            <person name="Wang J."/>
            <person name="Qian W."/>
            <person name="Li D."/>
            <person name="Wang L."/>
        </authorList>
    </citation>
    <scope>NUCLEOTIDE SEQUENCE [LARGE SCALE GENOMIC DNA]</scope>
    <source>
        <strain>ATCC 39541 / Classical Ogawa 395 / O395</strain>
    </source>
</reference>